<evidence type="ECO:0000250" key="1"/>
<evidence type="ECO:0000255" key="2">
    <source>
        <dbReference type="PROSITE-ProRule" id="PRU00169"/>
    </source>
</evidence>
<evidence type="ECO:0000255" key="3">
    <source>
        <dbReference type="PROSITE-ProRule" id="PRU01091"/>
    </source>
</evidence>
<evidence type="ECO:0000269" key="4">
    <source>
    </source>
</evidence>
<proteinExistence type="evidence at protein level"/>
<reference key="1">
    <citation type="journal article" date="2005" name="J. Bacteriol.">
        <title>Insights on evolution of virulence and resistance from the complete genome analysis of an early methicillin-resistant Staphylococcus aureus strain and a biofilm-producing methicillin-resistant Staphylococcus epidermidis strain.</title>
        <authorList>
            <person name="Gill S.R."/>
            <person name="Fouts D.E."/>
            <person name="Archer G.L."/>
            <person name="Mongodin E.F."/>
            <person name="DeBoy R.T."/>
            <person name="Ravel J."/>
            <person name="Paulsen I.T."/>
            <person name="Kolonay J.F."/>
            <person name="Brinkac L.M."/>
            <person name="Beanan M.J."/>
            <person name="Dodson R.J."/>
            <person name="Daugherty S.C."/>
            <person name="Madupu R."/>
            <person name="Angiuoli S.V."/>
            <person name="Durkin A.S."/>
            <person name="Haft D.H."/>
            <person name="Vamathevan J.J."/>
            <person name="Khouri H."/>
            <person name="Utterback T.R."/>
            <person name="Lee C."/>
            <person name="Dimitrov G."/>
            <person name="Jiang L."/>
            <person name="Qin H."/>
            <person name="Weidman J."/>
            <person name="Tran K."/>
            <person name="Kang K.H."/>
            <person name="Hance I.R."/>
            <person name="Nelson K.E."/>
            <person name="Fraser C.M."/>
        </authorList>
    </citation>
    <scope>NUCLEOTIDE SEQUENCE [LARGE SCALE GENOMIC DNA]</scope>
    <source>
        <strain>COL</strain>
    </source>
</reference>
<reference key="2">
    <citation type="journal article" date="2006" name="J. Bacteriol.">
        <title>Influence of the two-component system saeRS on global gene expression in two different Staphylococcus aureus strains.</title>
        <authorList>
            <person name="Rogasch K."/>
            <person name="Ruehmling V."/>
            <person name="Pane-Farre J."/>
            <person name="Hoeper D."/>
            <person name="Weinberg C."/>
            <person name="Fuchs S."/>
            <person name="Schmudde M."/>
            <person name="Broeker B.M."/>
            <person name="Wolz C."/>
            <person name="Hecker M."/>
            <person name="Engelmann S."/>
        </authorList>
    </citation>
    <scope>FUNCTION IN GLOBAL REGULATION</scope>
</reference>
<name>SAER_STAAC</name>
<comment type="function">
    <text evidence="1 4">Member of the two-component regulatory system SaeR/SaeS involved in the regulation of staphylococcal virulence factors in a strain-dependent fashion. Probably functions as a transcriptional regulator via a specific DNA-binding domain, recognizing motifs near the promoter sequences of target genes (By similarity). Modulates the expression of several genes.</text>
</comment>
<comment type="subcellular location">
    <subcellularLocation>
        <location evidence="1">Cytoplasm</location>
    </subcellularLocation>
</comment>
<comment type="PTM">
    <text evidence="1">Phosphorylated by SaeS.</text>
</comment>
<organism>
    <name type="scientific">Staphylococcus aureus (strain COL)</name>
    <dbReference type="NCBI Taxonomy" id="93062"/>
    <lineage>
        <taxon>Bacteria</taxon>
        <taxon>Bacillati</taxon>
        <taxon>Bacillota</taxon>
        <taxon>Bacilli</taxon>
        <taxon>Bacillales</taxon>
        <taxon>Staphylococcaceae</taxon>
        <taxon>Staphylococcus</taxon>
    </lineage>
</organism>
<feature type="chain" id="PRO_0000295919" description="Response regulator SaeR">
    <location>
        <begin position="1"/>
        <end position="228"/>
    </location>
</feature>
<feature type="domain" description="Response regulatory" evidence="2">
    <location>
        <begin position="3"/>
        <end position="116"/>
    </location>
</feature>
<feature type="DNA-binding region" description="OmpR/PhoB-type" evidence="3">
    <location>
        <begin position="127"/>
        <end position="226"/>
    </location>
</feature>
<feature type="modified residue" description="4-aspartylphosphate" evidence="2">
    <location>
        <position position="51"/>
    </location>
</feature>
<dbReference type="EMBL" id="CP000046">
    <property type="protein sequence ID" value="AAW37825.1"/>
    <property type="molecule type" value="Genomic_DNA"/>
</dbReference>
<dbReference type="RefSeq" id="WP_000149344.1">
    <property type="nucleotide sequence ID" value="NZ_JBGOFO010000005.1"/>
</dbReference>
<dbReference type="SMR" id="Q5HHW4"/>
<dbReference type="KEGG" id="sac:SACOL0766"/>
<dbReference type="HOGENOM" id="CLU_000445_30_4_9"/>
<dbReference type="Proteomes" id="UP000000530">
    <property type="component" value="Chromosome"/>
</dbReference>
<dbReference type="GO" id="GO:0005829">
    <property type="term" value="C:cytosol"/>
    <property type="evidence" value="ECO:0007669"/>
    <property type="project" value="TreeGrafter"/>
</dbReference>
<dbReference type="GO" id="GO:0032993">
    <property type="term" value="C:protein-DNA complex"/>
    <property type="evidence" value="ECO:0007669"/>
    <property type="project" value="TreeGrafter"/>
</dbReference>
<dbReference type="GO" id="GO:0000156">
    <property type="term" value="F:phosphorelay response regulator activity"/>
    <property type="evidence" value="ECO:0007669"/>
    <property type="project" value="TreeGrafter"/>
</dbReference>
<dbReference type="GO" id="GO:0000976">
    <property type="term" value="F:transcription cis-regulatory region binding"/>
    <property type="evidence" value="ECO:0007669"/>
    <property type="project" value="TreeGrafter"/>
</dbReference>
<dbReference type="GO" id="GO:0006355">
    <property type="term" value="P:regulation of DNA-templated transcription"/>
    <property type="evidence" value="ECO:0007669"/>
    <property type="project" value="InterPro"/>
</dbReference>
<dbReference type="CDD" id="cd17574">
    <property type="entry name" value="REC_OmpR"/>
    <property type="match status" value="1"/>
</dbReference>
<dbReference type="CDD" id="cd00383">
    <property type="entry name" value="trans_reg_C"/>
    <property type="match status" value="1"/>
</dbReference>
<dbReference type="FunFam" id="1.10.10.10:FF:000018">
    <property type="entry name" value="DNA-binding response regulator ResD"/>
    <property type="match status" value="1"/>
</dbReference>
<dbReference type="Gene3D" id="3.40.50.2300">
    <property type="match status" value="1"/>
</dbReference>
<dbReference type="Gene3D" id="6.10.250.690">
    <property type="match status" value="1"/>
</dbReference>
<dbReference type="Gene3D" id="1.10.10.10">
    <property type="entry name" value="Winged helix-like DNA-binding domain superfamily/Winged helix DNA-binding domain"/>
    <property type="match status" value="1"/>
</dbReference>
<dbReference type="InterPro" id="IPR011006">
    <property type="entry name" value="CheY-like_superfamily"/>
</dbReference>
<dbReference type="InterPro" id="IPR001867">
    <property type="entry name" value="OmpR/PhoB-type_DNA-bd"/>
</dbReference>
<dbReference type="InterPro" id="IPR001789">
    <property type="entry name" value="Sig_transdc_resp-reg_receiver"/>
</dbReference>
<dbReference type="InterPro" id="IPR039420">
    <property type="entry name" value="WalR-like"/>
</dbReference>
<dbReference type="InterPro" id="IPR036388">
    <property type="entry name" value="WH-like_DNA-bd_sf"/>
</dbReference>
<dbReference type="PANTHER" id="PTHR48111">
    <property type="entry name" value="REGULATOR OF RPOS"/>
    <property type="match status" value="1"/>
</dbReference>
<dbReference type="PANTHER" id="PTHR48111:SF2">
    <property type="entry name" value="RESPONSE REGULATOR SAER"/>
    <property type="match status" value="1"/>
</dbReference>
<dbReference type="Pfam" id="PF00072">
    <property type="entry name" value="Response_reg"/>
    <property type="match status" value="1"/>
</dbReference>
<dbReference type="Pfam" id="PF00486">
    <property type="entry name" value="Trans_reg_C"/>
    <property type="match status" value="1"/>
</dbReference>
<dbReference type="SMART" id="SM00448">
    <property type="entry name" value="REC"/>
    <property type="match status" value="1"/>
</dbReference>
<dbReference type="SMART" id="SM00862">
    <property type="entry name" value="Trans_reg_C"/>
    <property type="match status" value="1"/>
</dbReference>
<dbReference type="SUPFAM" id="SSF52172">
    <property type="entry name" value="CheY-like"/>
    <property type="match status" value="1"/>
</dbReference>
<dbReference type="PROSITE" id="PS51755">
    <property type="entry name" value="OMPR_PHOB"/>
    <property type="match status" value="1"/>
</dbReference>
<dbReference type="PROSITE" id="PS50110">
    <property type="entry name" value="RESPONSE_REGULATORY"/>
    <property type="match status" value="1"/>
</dbReference>
<accession>Q5HHW4</accession>
<sequence length="228" mass="26858">MTHLLIVDDEQDIVDICQTYFEYEGYKVTTTTSGKEAISLLSNDIDIMVLDIMMPEVNGYDIVKEMKRQKLDIPFIYLTAKTQEHDTIYALTLGADDYVKKPFSPRELVLRINNLLTRMKKYHHQPVEQLSFDELTLINLSKVVTVNGHEVPMRIKEFELLWYLASRENEVISKSELLEKVWGYDYYEDANTVNVHIHRIREKLEKESFTTYTITTVWGLGYKFERSR</sequence>
<protein>
    <recommendedName>
        <fullName>Response regulator SaeR</fullName>
    </recommendedName>
    <alternativeName>
        <fullName>Staphylococcus exoprotein expression protein R</fullName>
    </alternativeName>
</protein>
<gene>
    <name type="primary">saeR</name>
    <name type="ordered locus">SACOL0766</name>
</gene>
<keyword id="KW-0963">Cytoplasm</keyword>
<keyword id="KW-0238">DNA-binding</keyword>
<keyword id="KW-0597">Phosphoprotein</keyword>
<keyword id="KW-0716">Sensory transduction</keyword>
<keyword id="KW-0804">Transcription</keyword>
<keyword id="KW-0805">Transcription regulation</keyword>
<keyword id="KW-0902">Two-component regulatory system</keyword>
<keyword id="KW-0843">Virulence</keyword>